<feature type="chain" id="PRO_1000137051" description="Amino-acid acetyltransferase">
    <location>
        <begin position="1"/>
        <end position="444"/>
    </location>
</feature>
<feature type="domain" description="N-acetyltransferase" evidence="1">
    <location>
        <begin position="295"/>
        <end position="434"/>
    </location>
</feature>
<reference key="1">
    <citation type="journal article" date="2008" name="J. Bacteriol.">
        <title>Complete genome sequence of uropathogenic Proteus mirabilis, a master of both adherence and motility.</title>
        <authorList>
            <person name="Pearson M.M."/>
            <person name="Sebaihia M."/>
            <person name="Churcher C."/>
            <person name="Quail M.A."/>
            <person name="Seshasayee A.S."/>
            <person name="Luscombe N.M."/>
            <person name="Abdellah Z."/>
            <person name="Arrosmith C."/>
            <person name="Atkin B."/>
            <person name="Chillingworth T."/>
            <person name="Hauser H."/>
            <person name="Jagels K."/>
            <person name="Moule S."/>
            <person name="Mungall K."/>
            <person name="Norbertczak H."/>
            <person name="Rabbinowitsch E."/>
            <person name="Walker D."/>
            <person name="Whithead S."/>
            <person name="Thomson N.R."/>
            <person name="Rather P.N."/>
            <person name="Parkhill J."/>
            <person name="Mobley H.L.T."/>
        </authorList>
    </citation>
    <scope>NUCLEOTIDE SEQUENCE [LARGE SCALE GENOMIC DNA]</scope>
    <source>
        <strain>HI4320</strain>
    </source>
</reference>
<keyword id="KW-0012">Acyltransferase</keyword>
<keyword id="KW-0028">Amino-acid biosynthesis</keyword>
<keyword id="KW-0055">Arginine biosynthesis</keyword>
<keyword id="KW-0963">Cytoplasm</keyword>
<keyword id="KW-1185">Reference proteome</keyword>
<keyword id="KW-0808">Transferase</keyword>
<proteinExistence type="inferred from homology"/>
<organism>
    <name type="scientific">Proteus mirabilis (strain HI4320)</name>
    <dbReference type="NCBI Taxonomy" id="529507"/>
    <lineage>
        <taxon>Bacteria</taxon>
        <taxon>Pseudomonadati</taxon>
        <taxon>Pseudomonadota</taxon>
        <taxon>Gammaproteobacteria</taxon>
        <taxon>Enterobacterales</taxon>
        <taxon>Morganellaceae</taxon>
        <taxon>Proteus</taxon>
    </lineage>
</organism>
<dbReference type="EC" id="2.3.1.1" evidence="1"/>
<dbReference type="EMBL" id="AM942759">
    <property type="protein sequence ID" value="CAR44559.1"/>
    <property type="molecule type" value="Genomic_DNA"/>
</dbReference>
<dbReference type="RefSeq" id="WP_004249500.1">
    <property type="nucleotide sequence ID" value="NC_010554.1"/>
</dbReference>
<dbReference type="SMR" id="B4F2F5"/>
<dbReference type="EnsemblBacteria" id="CAR44559">
    <property type="protein sequence ID" value="CAR44559"/>
    <property type="gene ID" value="PMI2307"/>
</dbReference>
<dbReference type="GeneID" id="6803060"/>
<dbReference type="KEGG" id="pmr:PMI2307"/>
<dbReference type="eggNOG" id="COG0548">
    <property type="taxonomic scope" value="Bacteria"/>
</dbReference>
<dbReference type="eggNOG" id="COG1246">
    <property type="taxonomic scope" value="Bacteria"/>
</dbReference>
<dbReference type="HOGENOM" id="CLU_024773_0_0_6"/>
<dbReference type="UniPathway" id="UPA00068">
    <property type="reaction ID" value="UER00106"/>
</dbReference>
<dbReference type="Proteomes" id="UP000008319">
    <property type="component" value="Chromosome"/>
</dbReference>
<dbReference type="GO" id="GO:0005737">
    <property type="term" value="C:cytoplasm"/>
    <property type="evidence" value="ECO:0007669"/>
    <property type="project" value="UniProtKB-SubCell"/>
</dbReference>
<dbReference type="GO" id="GO:0004042">
    <property type="term" value="F:L-glutamate N-acetyltransferase activity"/>
    <property type="evidence" value="ECO:0007669"/>
    <property type="project" value="UniProtKB-UniRule"/>
</dbReference>
<dbReference type="GO" id="GO:0006526">
    <property type="term" value="P:L-arginine biosynthetic process"/>
    <property type="evidence" value="ECO:0007669"/>
    <property type="project" value="UniProtKB-UniRule"/>
</dbReference>
<dbReference type="CDD" id="cd04237">
    <property type="entry name" value="AAK_NAGS-ABP"/>
    <property type="match status" value="1"/>
</dbReference>
<dbReference type="CDD" id="cd04301">
    <property type="entry name" value="NAT_SF"/>
    <property type="match status" value="1"/>
</dbReference>
<dbReference type="FunFam" id="3.40.1160.10:FF:000005">
    <property type="entry name" value="Amino-acid acetyltransferase"/>
    <property type="match status" value="1"/>
</dbReference>
<dbReference type="FunFam" id="3.40.630.30:FF:000009">
    <property type="entry name" value="Amino-acid acetyltransferase"/>
    <property type="match status" value="1"/>
</dbReference>
<dbReference type="Gene3D" id="3.40.630.30">
    <property type="match status" value="1"/>
</dbReference>
<dbReference type="Gene3D" id="3.40.1160.10">
    <property type="entry name" value="Acetylglutamate kinase-like"/>
    <property type="match status" value="1"/>
</dbReference>
<dbReference type="HAMAP" id="MF_01105">
    <property type="entry name" value="N_acetyl_glu_synth"/>
    <property type="match status" value="1"/>
</dbReference>
<dbReference type="InterPro" id="IPR036393">
    <property type="entry name" value="AceGlu_kinase-like_sf"/>
</dbReference>
<dbReference type="InterPro" id="IPR016181">
    <property type="entry name" value="Acyl_CoA_acyltransferase"/>
</dbReference>
<dbReference type="InterPro" id="IPR001048">
    <property type="entry name" value="Asp/Glu/Uridylate_kinase"/>
</dbReference>
<dbReference type="InterPro" id="IPR000182">
    <property type="entry name" value="GNAT_dom"/>
</dbReference>
<dbReference type="InterPro" id="IPR033719">
    <property type="entry name" value="NAGS_kin"/>
</dbReference>
<dbReference type="InterPro" id="IPR010167">
    <property type="entry name" value="NH2A_AcTrfase"/>
</dbReference>
<dbReference type="NCBIfam" id="TIGR01890">
    <property type="entry name" value="N-Ac-Glu-synth"/>
    <property type="match status" value="1"/>
</dbReference>
<dbReference type="NCBIfam" id="NF003641">
    <property type="entry name" value="PRK05279.1"/>
    <property type="match status" value="1"/>
</dbReference>
<dbReference type="PANTHER" id="PTHR30602">
    <property type="entry name" value="AMINO-ACID ACETYLTRANSFERASE"/>
    <property type="match status" value="1"/>
</dbReference>
<dbReference type="PANTHER" id="PTHR30602:SF12">
    <property type="entry name" value="AMINO-ACID ACETYLTRANSFERASE NAGS1, CHLOROPLASTIC-RELATED"/>
    <property type="match status" value="1"/>
</dbReference>
<dbReference type="Pfam" id="PF00696">
    <property type="entry name" value="AA_kinase"/>
    <property type="match status" value="1"/>
</dbReference>
<dbReference type="Pfam" id="PF00583">
    <property type="entry name" value="Acetyltransf_1"/>
    <property type="match status" value="1"/>
</dbReference>
<dbReference type="PIRSF" id="PIRSF000423">
    <property type="entry name" value="ArgA"/>
    <property type="match status" value="1"/>
</dbReference>
<dbReference type="SUPFAM" id="SSF55729">
    <property type="entry name" value="Acyl-CoA N-acyltransferases (Nat)"/>
    <property type="match status" value="1"/>
</dbReference>
<dbReference type="SUPFAM" id="SSF53633">
    <property type="entry name" value="Carbamate kinase-like"/>
    <property type="match status" value="1"/>
</dbReference>
<dbReference type="PROSITE" id="PS51186">
    <property type="entry name" value="GNAT"/>
    <property type="match status" value="1"/>
</dbReference>
<name>ARGA_PROMH</name>
<accession>B4F2F5</accession>
<evidence type="ECO:0000255" key="1">
    <source>
        <dbReference type="HAMAP-Rule" id="MF_01105"/>
    </source>
</evidence>
<sequence length="444" mass="49390">MKERSTELVDGFRHSVPYINAHRGKTFVIMLGGEAIAHENFPSIINDIGLLHSLGIRLVVVYGARPQIDVALEEQKISPLYHKHTRITDSKTLEVVKQSAGTLQLDITARLSMSLSNTPLQGAHINVVSGNFVIAQPLGVDDGVDYCHSGKIRRIDEEAIHRQLDNHAIVLIGPVAVSVTGESFNLTSEEVATQLAIKLKAQKLIGFCSSQGVVDASGQIVSELLPNQAEERIQALQTTGDYHSGTVRFLRGAVTACRRGVERSHLLSYQADGAIVQELFSRDGIGTQIVMESAEKVRRANINDIGGILELIRPLEQQGILVRRSREQLEMEIDQFTIIERDNLTIACAALYPYQSEKIGEMACVAVHPDYRSSCRGEVLLQRISTQAKQMGLDKLFVLTTRSIHWFQEKGFTPAEIDKLPIEKQALYNYQRRSKILILDLHKE</sequence>
<protein>
    <recommendedName>
        <fullName evidence="1">Amino-acid acetyltransferase</fullName>
        <ecNumber evidence="1">2.3.1.1</ecNumber>
    </recommendedName>
    <alternativeName>
        <fullName evidence="1">N-acetylglutamate synthase</fullName>
        <shortName evidence="1">AGS</shortName>
        <shortName evidence="1">NAGS</shortName>
    </alternativeName>
</protein>
<gene>
    <name evidence="1" type="primary">argA</name>
    <name type="ordered locus">PMI2307</name>
</gene>
<comment type="catalytic activity">
    <reaction evidence="1">
        <text>L-glutamate + acetyl-CoA = N-acetyl-L-glutamate + CoA + H(+)</text>
        <dbReference type="Rhea" id="RHEA:24292"/>
        <dbReference type="ChEBI" id="CHEBI:15378"/>
        <dbReference type="ChEBI" id="CHEBI:29985"/>
        <dbReference type="ChEBI" id="CHEBI:44337"/>
        <dbReference type="ChEBI" id="CHEBI:57287"/>
        <dbReference type="ChEBI" id="CHEBI:57288"/>
        <dbReference type="EC" id="2.3.1.1"/>
    </reaction>
</comment>
<comment type="pathway">
    <text evidence="1">Amino-acid biosynthesis; L-arginine biosynthesis; N(2)-acetyl-L-ornithine from L-glutamate: step 1/4.</text>
</comment>
<comment type="subunit">
    <text evidence="1">Homohexamer.</text>
</comment>
<comment type="subcellular location">
    <subcellularLocation>
        <location evidence="1">Cytoplasm</location>
    </subcellularLocation>
</comment>
<comment type="similarity">
    <text evidence="1">Belongs to the acetyltransferase family. ArgA subfamily.</text>
</comment>